<evidence type="ECO:0000255" key="1">
    <source>
        <dbReference type="HAMAP-Rule" id="MF_00505"/>
    </source>
</evidence>
<proteinExistence type="inferred from homology"/>
<comment type="function">
    <text evidence="1">Molecular chaperone. Has ATPase activity.</text>
</comment>
<comment type="subunit">
    <text evidence="1">Homodimer.</text>
</comment>
<comment type="subcellular location">
    <subcellularLocation>
        <location evidence="1">Cytoplasm</location>
    </subcellularLocation>
</comment>
<comment type="similarity">
    <text evidence="1">Belongs to the heat shock protein 90 family.</text>
</comment>
<reference key="1">
    <citation type="journal article" date="2000" name="Nature">
        <title>Complete genome sequence of Pseudomonas aeruginosa PAO1, an opportunistic pathogen.</title>
        <authorList>
            <person name="Stover C.K."/>
            <person name="Pham X.-Q.T."/>
            <person name="Erwin A.L."/>
            <person name="Mizoguchi S.D."/>
            <person name="Warrener P."/>
            <person name="Hickey M.J."/>
            <person name="Brinkman F.S.L."/>
            <person name="Hufnagle W.O."/>
            <person name="Kowalik D.J."/>
            <person name="Lagrou M."/>
            <person name="Garber R.L."/>
            <person name="Goltry L."/>
            <person name="Tolentino E."/>
            <person name="Westbrock-Wadman S."/>
            <person name="Yuan Y."/>
            <person name="Brody L.L."/>
            <person name="Coulter S.N."/>
            <person name="Folger K.R."/>
            <person name="Kas A."/>
            <person name="Larbig K."/>
            <person name="Lim R.M."/>
            <person name="Smith K.A."/>
            <person name="Spencer D.H."/>
            <person name="Wong G.K.-S."/>
            <person name="Wu Z."/>
            <person name="Paulsen I.T."/>
            <person name="Reizer J."/>
            <person name="Saier M.H. Jr."/>
            <person name="Hancock R.E.W."/>
            <person name="Lory S."/>
            <person name="Olson M.V."/>
        </authorList>
    </citation>
    <scope>NUCLEOTIDE SEQUENCE [LARGE SCALE GENOMIC DNA]</scope>
    <source>
        <strain>ATCC 15692 / DSM 22644 / CIP 104116 / JCM 14847 / LMG 12228 / 1C / PRS 101 / PAO1</strain>
    </source>
</reference>
<accession>Q9I3C5</accession>
<keyword id="KW-0067">ATP-binding</keyword>
<keyword id="KW-0143">Chaperone</keyword>
<keyword id="KW-0963">Cytoplasm</keyword>
<keyword id="KW-0547">Nucleotide-binding</keyword>
<keyword id="KW-1185">Reference proteome</keyword>
<keyword id="KW-0346">Stress response</keyword>
<protein>
    <recommendedName>
        <fullName evidence="1">Chaperone protein HtpG</fullName>
    </recommendedName>
    <alternativeName>
        <fullName evidence="1">Heat shock protein HtpG</fullName>
    </alternativeName>
    <alternativeName>
        <fullName evidence="1">High temperature protein G</fullName>
    </alternativeName>
</protein>
<gene>
    <name evidence="1" type="primary">htpG</name>
    <name type="ordered locus">PA1596</name>
</gene>
<feature type="chain" id="PRO_0000063003" description="Chaperone protein HtpG">
    <location>
        <begin position="1"/>
        <end position="634"/>
    </location>
</feature>
<feature type="region of interest" description="A; substrate-binding" evidence="1">
    <location>
        <begin position="1"/>
        <end position="342"/>
    </location>
</feature>
<feature type="region of interest" description="B" evidence="1">
    <location>
        <begin position="343"/>
        <end position="559"/>
    </location>
</feature>
<feature type="region of interest" description="C" evidence="1">
    <location>
        <begin position="560"/>
        <end position="634"/>
    </location>
</feature>
<dbReference type="EMBL" id="AE004091">
    <property type="protein sequence ID" value="AAG04985.1"/>
    <property type="molecule type" value="Genomic_DNA"/>
</dbReference>
<dbReference type="PIR" id="A83447">
    <property type="entry name" value="A83447"/>
</dbReference>
<dbReference type="RefSeq" id="NP_250287.1">
    <property type="nucleotide sequence ID" value="NC_002516.2"/>
</dbReference>
<dbReference type="RefSeq" id="WP_003087446.1">
    <property type="nucleotide sequence ID" value="NZ_QZGE01000003.1"/>
</dbReference>
<dbReference type="SMR" id="Q9I3C5"/>
<dbReference type="FunCoup" id="Q9I3C5">
    <property type="interactions" value="596"/>
</dbReference>
<dbReference type="IntAct" id="Q9I3C5">
    <property type="interactions" value="1"/>
</dbReference>
<dbReference type="MINT" id="Q9I3C5"/>
<dbReference type="STRING" id="208964.PA1596"/>
<dbReference type="PaxDb" id="208964-PA1596"/>
<dbReference type="GeneID" id="881933"/>
<dbReference type="KEGG" id="pae:PA1596"/>
<dbReference type="PATRIC" id="fig|208964.12.peg.1656"/>
<dbReference type="PseudoCAP" id="PA1596"/>
<dbReference type="HOGENOM" id="CLU_006684_3_0_6"/>
<dbReference type="InParanoid" id="Q9I3C5"/>
<dbReference type="OrthoDB" id="9802640at2"/>
<dbReference type="PhylomeDB" id="Q9I3C5"/>
<dbReference type="BioCyc" id="PAER208964:G1FZ6-1626-MONOMER"/>
<dbReference type="Proteomes" id="UP000002438">
    <property type="component" value="Chromosome"/>
</dbReference>
<dbReference type="GO" id="GO:0005829">
    <property type="term" value="C:cytosol"/>
    <property type="evidence" value="ECO:0000318"/>
    <property type="project" value="GO_Central"/>
</dbReference>
<dbReference type="GO" id="GO:0005524">
    <property type="term" value="F:ATP binding"/>
    <property type="evidence" value="ECO:0000318"/>
    <property type="project" value="GO_Central"/>
</dbReference>
<dbReference type="GO" id="GO:0016887">
    <property type="term" value="F:ATP hydrolysis activity"/>
    <property type="evidence" value="ECO:0000318"/>
    <property type="project" value="GO_Central"/>
</dbReference>
<dbReference type="GO" id="GO:0140662">
    <property type="term" value="F:ATP-dependent protein folding chaperone"/>
    <property type="evidence" value="ECO:0007669"/>
    <property type="project" value="InterPro"/>
</dbReference>
<dbReference type="GO" id="GO:0051082">
    <property type="term" value="F:unfolded protein binding"/>
    <property type="evidence" value="ECO:0000318"/>
    <property type="project" value="GO_Central"/>
</dbReference>
<dbReference type="GO" id="GO:0006974">
    <property type="term" value="P:DNA damage response"/>
    <property type="evidence" value="ECO:0000318"/>
    <property type="project" value="GO_Central"/>
</dbReference>
<dbReference type="GO" id="GO:0006457">
    <property type="term" value="P:protein folding"/>
    <property type="evidence" value="ECO:0000318"/>
    <property type="project" value="GO_Central"/>
</dbReference>
<dbReference type="GO" id="GO:0009408">
    <property type="term" value="P:response to heat"/>
    <property type="evidence" value="ECO:0000318"/>
    <property type="project" value="GO_Central"/>
</dbReference>
<dbReference type="CDD" id="cd16927">
    <property type="entry name" value="HATPase_Hsp90-like"/>
    <property type="match status" value="1"/>
</dbReference>
<dbReference type="FunFam" id="1.20.120.790:FF:000008">
    <property type="entry name" value="Chaperone protein HtpG"/>
    <property type="match status" value="1"/>
</dbReference>
<dbReference type="FunFam" id="3.30.230.80:FF:000002">
    <property type="entry name" value="Molecular chaperone HtpG"/>
    <property type="match status" value="1"/>
</dbReference>
<dbReference type="FunFam" id="3.30.565.10:FF:000009">
    <property type="entry name" value="Molecular chaperone HtpG"/>
    <property type="match status" value="1"/>
</dbReference>
<dbReference type="FunFam" id="3.40.50.11260:FF:000002">
    <property type="entry name" value="Molecular chaperone HtpG"/>
    <property type="match status" value="1"/>
</dbReference>
<dbReference type="Gene3D" id="3.30.230.80">
    <property type="match status" value="1"/>
</dbReference>
<dbReference type="Gene3D" id="3.40.50.11260">
    <property type="match status" value="1"/>
</dbReference>
<dbReference type="Gene3D" id="1.20.120.790">
    <property type="entry name" value="Heat shock protein 90, C-terminal domain"/>
    <property type="match status" value="1"/>
</dbReference>
<dbReference type="Gene3D" id="3.30.565.10">
    <property type="entry name" value="Histidine kinase-like ATPase, C-terminal domain"/>
    <property type="match status" value="1"/>
</dbReference>
<dbReference type="HAMAP" id="MF_00505">
    <property type="entry name" value="HSP90"/>
    <property type="match status" value="1"/>
</dbReference>
<dbReference type="InterPro" id="IPR036890">
    <property type="entry name" value="HATPase_C_sf"/>
</dbReference>
<dbReference type="InterPro" id="IPR019805">
    <property type="entry name" value="Heat_shock_protein_90_CS"/>
</dbReference>
<dbReference type="InterPro" id="IPR037196">
    <property type="entry name" value="HSP90_C"/>
</dbReference>
<dbReference type="InterPro" id="IPR001404">
    <property type="entry name" value="Hsp90_fam"/>
</dbReference>
<dbReference type="InterPro" id="IPR020575">
    <property type="entry name" value="Hsp90_N"/>
</dbReference>
<dbReference type="InterPro" id="IPR020568">
    <property type="entry name" value="Ribosomal_Su5_D2-typ_SF"/>
</dbReference>
<dbReference type="NCBIfam" id="NF003555">
    <property type="entry name" value="PRK05218.1"/>
    <property type="match status" value="1"/>
</dbReference>
<dbReference type="PANTHER" id="PTHR11528">
    <property type="entry name" value="HEAT SHOCK PROTEIN 90 FAMILY MEMBER"/>
    <property type="match status" value="1"/>
</dbReference>
<dbReference type="Pfam" id="PF13589">
    <property type="entry name" value="HATPase_c_3"/>
    <property type="match status" value="1"/>
</dbReference>
<dbReference type="Pfam" id="PF00183">
    <property type="entry name" value="HSP90"/>
    <property type="match status" value="1"/>
</dbReference>
<dbReference type="PIRSF" id="PIRSF002583">
    <property type="entry name" value="Hsp90"/>
    <property type="match status" value="1"/>
</dbReference>
<dbReference type="PRINTS" id="PR00775">
    <property type="entry name" value="HEATSHOCK90"/>
</dbReference>
<dbReference type="SMART" id="SM00387">
    <property type="entry name" value="HATPase_c"/>
    <property type="match status" value="1"/>
</dbReference>
<dbReference type="SUPFAM" id="SSF55874">
    <property type="entry name" value="ATPase domain of HSP90 chaperone/DNA topoisomerase II/histidine kinase"/>
    <property type="match status" value="1"/>
</dbReference>
<dbReference type="SUPFAM" id="SSF110942">
    <property type="entry name" value="HSP90 C-terminal domain"/>
    <property type="match status" value="1"/>
</dbReference>
<dbReference type="SUPFAM" id="SSF54211">
    <property type="entry name" value="Ribosomal protein S5 domain 2-like"/>
    <property type="match status" value="1"/>
</dbReference>
<dbReference type="PROSITE" id="PS00298">
    <property type="entry name" value="HSP90"/>
    <property type="match status" value="1"/>
</dbReference>
<name>HTPG_PSEAE</name>
<organism>
    <name type="scientific">Pseudomonas aeruginosa (strain ATCC 15692 / DSM 22644 / CIP 104116 / JCM 14847 / LMG 12228 / 1C / PRS 101 / PAO1)</name>
    <dbReference type="NCBI Taxonomy" id="208964"/>
    <lineage>
        <taxon>Bacteria</taxon>
        <taxon>Pseudomonadati</taxon>
        <taxon>Pseudomonadota</taxon>
        <taxon>Gammaproteobacteria</taxon>
        <taxon>Pseudomonadales</taxon>
        <taxon>Pseudomonadaceae</taxon>
        <taxon>Pseudomonas</taxon>
    </lineage>
</organism>
<sequence>MSVETQKETLGFQTEVKQLLHLMIHSLYSNKEIFLRELISNASDAADKLRFEALANPELLEGGAELKIRVSFDKEANTVTLEDNGIGMSREDVVTHLGTIAKSGTADFLKNLSGDQKKDSHLIGQFGVGFYSAFIVADKVDVYSRRAGQPASEGVHWSSKGEGEFDVATIDKPERGTRIVLHLKKGEEEFADGWRLRNVIKKYSDHIALPIELPKEFHGEEADKPAEPEWETVNRASALWTRPRAEVKDEEYQEFYKHVAHDFENPLSWSHNKVEGKLEYTSLLYVPGRAPFDLYHREAPRGLKLYVQRVFIMDQADEFLPLYLRFIKGVVDSNDLSLNVSREILQKDPVIDSMKSALTKRVLDMLEKLAKNEPEQYKTFWKNFGQVLKEGPAEDFGNKEKIAGLLRFASTGDDSGEQSVALADYIGRMKEGQDKIYYLTGESYSQVKNSPHLEVFRKKGIEVLLLTDRIDEWLMSYLPEFDGKQFVDVARGDLDLGSLDSEEDKKAQEEVAKSKEGLIERLKKVLDEQVSEVRVSHRLTDSPAILAIGEQDLGLQMRQILEASGQKVPDSKPIFEINPQHPLIEKLDAEPDEDRFGELSHILFDQAALAAGDSLKDPGAYVRRLNKLLVELSA</sequence>